<evidence type="ECO:0000250" key="1"/>
<evidence type="ECO:0000250" key="2">
    <source>
        <dbReference type="UniProtKB" id="P16286"/>
    </source>
</evidence>
<evidence type="ECO:0000256" key="3">
    <source>
        <dbReference type="SAM" id="MobiDB-lite"/>
    </source>
</evidence>
<evidence type="ECO:0000305" key="4"/>
<evidence type="ECO:0007829" key="5">
    <source>
        <dbReference type="PDB" id="3OA1"/>
    </source>
</evidence>
<proteinExistence type="evidence at protein level"/>
<name>PHOSP_RABVP</name>
<feature type="chain" id="PRO_0000222831" description="Phosphoprotein">
    <location>
        <begin position="1"/>
        <end position="297"/>
    </location>
</feature>
<feature type="region of interest" description="Disordered" evidence="3">
    <location>
        <begin position="132"/>
        <end position="187"/>
    </location>
</feature>
<feature type="region of interest" description="DYNLL1 and DYNLL2 binding" evidence="1">
    <location>
        <begin position="138"/>
        <end position="172"/>
    </location>
</feature>
<feature type="short sequence motif" description="Nuclear export signal" evidence="1">
    <location>
        <begin position="49"/>
        <end position="58"/>
    </location>
</feature>
<feature type="short sequence motif" description="Nuclear localization signal" evidence="1">
    <location>
        <begin position="211"/>
        <end position="214"/>
    </location>
</feature>
<feature type="compositionally biased region" description="Basic and acidic residues" evidence="3">
    <location>
        <begin position="140"/>
        <end position="157"/>
    </location>
</feature>
<feature type="compositionally biased region" description="Polar residues" evidence="3">
    <location>
        <begin position="158"/>
        <end position="170"/>
    </location>
</feature>
<feature type="modified residue" description="Phosphoserine; by host" evidence="1">
    <location>
        <position position="63"/>
    </location>
</feature>
<feature type="modified residue" description="Phosphoserine; by host PKC" evidence="1">
    <location>
        <position position="162"/>
    </location>
</feature>
<feature type="modified residue" description="Phosphoserine; by host PKC" evidence="1">
    <location>
        <position position="210"/>
    </location>
</feature>
<feature type="modified residue" description="Phosphoserine; by host PKC" evidence="1">
    <location>
        <position position="271"/>
    </location>
</feature>
<feature type="splice variant" id="VSP_026872" description="In isoform P5." evidence="4">
    <location>
        <begin position="1"/>
        <end position="82"/>
    </location>
</feature>
<feature type="splice variant" id="VSP_026873" description="In isoform P4." evidence="4">
    <location>
        <begin position="1"/>
        <end position="68"/>
    </location>
</feature>
<feature type="splice variant" id="VSP_026874" description="In isoform P3." evidence="4">
    <location>
        <begin position="1"/>
        <end position="52"/>
    </location>
</feature>
<feature type="splice variant" id="VSP_026875" description="In isoform P2." evidence="4">
    <location>
        <begin position="1"/>
        <end position="19"/>
    </location>
</feature>
<feature type="helix" evidence="5">
    <location>
        <begin position="193"/>
        <end position="207"/>
    </location>
</feature>
<feature type="turn" evidence="5">
    <location>
        <begin position="208"/>
        <end position="210"/>
    </location>
</feature>
<feature type="strand" evidence="5">
    <location>
        <begin position="213"/>
        <end position="215"/>
    </location>
</feature>
<feature type="strand" evidence="5">
    <location>
        <begin position="223"/>
        <end position="225"/>
    </location>
</feature>
<feature type="helix" evidence="5">
    <location>
        <begin position="228"/>
        <end position="230"/>
    </location>
</feature>
<feature type="helix" evidence="5">
    <location>
        <begin position="234"/>
        <end position="241"/>
    </location>
</feature>
<feature type="helix" evidence="5">
    <location>
        <begin position="247"/>
        <end position="252"/>
    </location>
</feature>
<feature type="helix" evidence="5">
    <location>
        <begin position="259"/>
        <end position="270"/>
    </location>
</feature>
<feature type="helix" evidence="5">
    <location>
        <begin position="272"/>
        <end position="277"/>
    </location>
</feature>
<feature type="helix" evidence="5">
    <location>
        <begin position="280"/>
        <end position="294"/>
    </location>
</feature>
<organismHost>
    <name type="scientific">Homo sapiens</name>
    <name type="common">Human</name>
    <dbReference type="NCBI Taxonomy" id="9606"/>
</organismHost>
<organismHost>
    <name type="scientific">Mammalia</name>
    <dbReference type="NCBI Taxonomy" id="40674"/>
</organismHost>
<protein>
    <recommendedName>
        <fullName>Phosphoprotein</fullName>
        <shortName>Protein P</shortName>
    </recommendedName>
    <alternativeName>
        <fullName>Protein M1</fullName>
    </alternativeName>
</protein>
<reference key="1">
    <citation type="journal article" date="1986" name="Proc. Natl. Acad. Sci. U.S.A.">
        <title>Walking along the rabies genome: is the large G-L intergenic region a remnant gene?</title>
        <authorList>
            <person name="Tordo N."/>
            <person name="Poch O."/>
            <person name="Ermine A."/>
            <person name="Keith G."/>
            <person name="Rougeon F."/>
        </authorList>
    </citation>
    <scope>NUCLEOTIDE SEQUENCE [GENOMIC RNA]</scope>
</reference>
<comment type="function">
    <text evidence="1 2">Non catalytic polymerase cofactor and regulatory protein that plays a role in viral transcription and replication. Stabilizes the RNA polymerase L to the N-RNA template and binds the soluble protein N, preventing it from encapsidating non-genomic RNA. Also inhibits host IFN-alpha and IFN-beta signaling by binding and retaining phosphorylated STAT1 in the cytoplasm or by inhibiting the DNA binding of STAT1 in the nucleus. Might be involved, through interaction with host dynein, in intracellular microtubule-dependent virus transport of incoming virus from the synapse toward the cell body (By similarity). Inhibits interferon induction pathways by interacting with host TBK1 and preventing the formation of dynamic cytoplasmic condensates that have liquid properties and that are essential for interferon production (By similarity).</text>
</comment>
<comment type="subunit">
    <molecule>Phosphoprotein</molecule>
    <text evidence="2">Homotrimer when phosphorylated. This trimer is stabilized by binding to the L protein. Binds soluble protein N, and ribonucleocapsid. Interacts with host DYNLL1 and DYNLL2; this interaction may play a role in intracellular microtubule-dependent virus transport of incoming virus. Interacts with host STAT1, STAT2 and PML. Interacts with host TBK1.</text>
</comment>
<comment type="subunit">
    <molecule>Isoform P3</molecule>
    <text evidence="1">Binds host PML.</text>
</comment>
<comment type="subcellular location">
    <molecule>Phosphoprotein</molecule>
    <subcellularLocation>
        <location>Virion</location>
    </subcellularLocation>
    <subcellularLocation>
        <location evidence="1">Host cytoplasm</location>
    </subcellularLocation>
</comment>
<comment type="subcellular location">
    <molecule>Isoform P2</molecule>
    <subcellularLocation>
        <location evidence="1">Host cytoplasm</location>
    </subcellularLocation>
</comment>
<comment type="subcellular location">
    <molecule>Isoform P3</molecule>
    <subcellularLocation>
        <location evidence="1">Host nucleus</location>
    </subcellularLocation>
</comment>
<comment type="subcellular location">
    <molecule>Isoform P4</molecule>
    <subcellularLocation>
        <location evidence="1">Host nucleus</location>
    </subcellularLocation>
</comment>
<comment type="subcellular location">
    <molecule>Isoform P5</molecule>
    <subcellularLocation>
        <location evidence="1">Host nucleus</location>
    </subcellularLocation>
</comment>
<comment type="alternative products">
    <event type="alternative initiation"/>
    <isoform>
        <id>P06747-1</id>
        <name>P</name>
        <sequence type="displayed"/>
    </isoform>
    <isoform>
        <id>P06747-2</id>
        <name>P2</name>
        <sequence type="described" ref="VSP_026875"/>
    </isoform>
    <isoform>
        <id>P06747-3</id>
        <name>P3</name>
        <sequence type="described" ref="VSP_026874"/>
    </isoform>
    <isoform>
        <id>P06747-4</id>
        <name>P4</name>
        <sequence type="described" ref="VSP_026873"/>
    </isoform>
    <isoform>
        <id>P06747-5</id>
        <name>P5</name>
        <sequence type="described" ref="VSP_026872"/>
    </isoform>
</comment>
<comment type="PTM">
    <text evidence="1">Phosphorylated by host PKC and by an unknown kinase.</text>
</comment>
<comment type="similarity">
    <text evidence="4">Belongs to the lyssavirus protein P family.</text>
</comment>
<gene>
    <name type="primary">P</name>
</gene>
<dbReference type="EMBL" id="M13215">
    <property type="protein sequence ID" value="AAA47216.1"/>
    <property type="molecule type" value="Genomic_RNA"/>
</dbReference>
<dbReference type="PIR" id="B26275">
    <property type="entry name" value="MNVNRV"/>
</dbReference>
<dbReference type="RefSeq" id="NP_056794.1">
    <property type="nucleotide sequence ID" value="NC_001542.1"/>
</dbReference>
<dbReference type="PDB" id="3OA1">
    <property type="method" value="X-ray"/>
    <property type="resolution" value="2.20 A"/>
    <property type="chains" value="A/B=69-297"/>
</dbReference>
<dbReference type="PDBsum" id="3OA1"/>
<dbReference type="SMR" id="P06747"/>
<dbReference type="DrugBank" id="DB11603">
    <property type="generic name" value="Rabies immune globulin, human"/>
</dbReference>
<dbReference type="DNASU" id="1489854"/>
<dbReference type="KEGG" id="vg:1489854"/>
<dbReference type="EvolutionaryTrace" id="P06747"/>
<dbReference type="Proteomes" id="UP000008649">
    <property type="component" value="Segment"/>
</dbReference>
<dbReference type="GO" id="GO:0043657">
    <property type="term" value="C:host cell"/>
    <property type="evidence" value="ECO:0007669"/>
    <property type="project" value="GOC"/>
</dbReference>
<dbReference type="GO" id="GO:0030430">
    <property type="term" value="C:host cell cytoplasm"/>
    <property type="evidence" value="ECO:0007669"/>
    <property type="project" value="UniProtKB-SubCell"/>
</dbReference>
<dbReference type="GO" id="GO:0042025">
    <property type="term" value="C:host cell nucleus"/>
    <property type="evidence" value="ECO:0007669"/>
    <property type="project" value="UniProtKB-SubCell"/>
</dbReference>
<dbReference type="GO" id="GO:0044423">
    <property type="term" value="C:virion component"/>
    <property type="evidence" value="ECO:0007669"/>
    <property type="project" value="UniProtKB-KW"/>
</dbReference>
<dbReference type="GO" id="GO:0003968">
    <property type="term" value="F:RNA-directed RNA polymerase activity"/>
    <property type="evidence" value="ECO:0007669"/>
    <property type="project" value="InterPro"/>
</dbReference>
<dbReference type="GO" id="GO:0075521">
    <property type="term" value="P:microtubule-dependent intracellular transport of viral material towards nucleus"/>
    <property type="evidence" value="ECO:0007669"/>
    <property type="project" value="UniProtKB-KW"/>
</dbReference>
<dbReference type="GO" id="GO:0046718">
    <property type="term" value="P:symbiont entry into host cell"/>
    <property type="evidence" value="ECO:0007669"/>
    <property type="project" value="UniProtKB-KW"/>
</dbReference>
<dbReference type="GO" id="GO:0039723">
    <property type="term" value="P:symbiont-mediated suppression of host cytoplasmic pattern recognition receptor signaling pathway via inhibition of TBK1 activity"/>
    <property type="evidence" value="ECO:0007669"/>
    <property type="project" value="UniProtKB-KW"/>
</dbReference>
<dbReference type="GO" id="GO:0039563">
    <property type="term" value="P:symbiont-mediated suppression of host JAK-STAT cascade via inhibition of STAT1 activity"/>
    <property type="evidence" value="ECO:0007669"/>
    <property type="project" value="UniProtKB-KW"/>
</dbReference>
<dbReference type="GO" id="GO:0039564">
    <property type="term" value="P:symbiont-mediated suppression of host JAK-STAT cascade via inhibition of STAT2 activity"/>
    <property type="evidence" value="ECO:0007669"/>
    <property type="project" value="UniProtKB-KW"/>
</dbReference>
<dbReference type="GO" id="GO:0039722">
    <property type="term" value="P:symbiont-mediated suppression of host toll-like receptor signaling pathway"/>
    <property type="evidence" value="ECO:0007669"/>
    <property type="project" value="UniProtKB-KW"/>
</dbReference>
<dbReference type="GO" id="GO:0039502">
    <property type="term" value="P:symbiont-mediated suppression of host type I interferon-mediated signaling pathway"/>
    <property type="evidence" value="ECO:0007669"/>
    <property type="project" value="UniProtKB-KW"/>
</dbReference>
<dbReference type="GO" id="GO:0019083">
    <property type="term" value="P:viral transcription"/>
    <property type="evidence" value="ECO:0007669"/>
    <property type="project" value="InterPro"/>
</dbReference>
<dbReference type="CDD" id="cd21032">
    <property type="entry name" value="RABV_P-protein-C_like"/>
    <property type="match status" value="1"/>
</dbReference>
<dbReference type="FunFam" id="1.20.120.820:FF:000001">
    <property type="entry name" value="Phosphoprotein"/>
    <property type="match status" value="1"/>
</dbReference>
<dbReference type="Gene3D" id="6.10.140.1560">
    <property type="match status" value="1"/>
</dbReference>
<dbReference type="Gene3D" id="1.20.120.820">
    <property type="entry name" value="Phosphoprotein, C-terminal domain"/>
    <property type="match status" value="1"/>
</dbReference>
<dbReference type="InterPro" id="IPR004259">
    <property type="entry name" value="PP_M1-like"/>
</dbReference>
<dbReference type="InterPro" id="IPR037199">
    <property type="entry name" value="PP_M1_C"/>
</dbReference>
<dbReference type="InterPro" id="IPR049506">
    <property type="entry name" value="RABV_P-like_C"/>
</dbReference>
<dbReference type="Pfam" id="PF03012">
    <property type="entry name" value="PP_M1"/>
    <property type="match status" value="1"/>
</dbReference>
<dbReference type="SUPFAM" id="SSF118173">
    <property type="entry name" value="Phosphoprotein M1, C-terminal domain"/>
    <property type="match status" value="1"/>
</dbReference>
<sequence>MSKIFVNPSAIRAGLADLEMAEETVDLINRNIEDNQAHLQGEPIEVDNLPEDMGRLHLDDGKSPNPGEMAKVGEGKYREDFQMDEGEDPSLLFQSYLDNVGVQIVRQIRSGERFLKIWSQTVEEIISYVAVNFPNPPGKSSEDKSTQTTGRELKKETTPTPSQRESQSSKARMAAQTASGPPALEWSATNEEDDLSVEAEIAHQIAESFSKKYKFPSRSSGILLYNFEQLKMNLDDIVKEAKNVPGVTRLARDGSKLPLRCVLGWVALANSKKFQLLVESNKLSKIMQDDLNRYTSC</sequence>
<keyword id="KW-0002">3D-structure</keyword>
<keyword id="KW-0024">Alternative initiation</keyword>
<keyword id="KW-0143">Chaperone</keyword>
<keyword id="KW-1176">Cytoplasmic inwards viral transport</keyword>
<keyword id="KW-1035">Host cytoplasm</keyword>
<keyword id="KW-1048">Host nucleus</keyword>
<keyword id="KW-0945">Host-virus interaction</keyword>
<keyword id="KW-1090">Inhibition of host innate immune response by virus</keyword>
<keyword id="KW-1114">Inhibition of host interferon signaling pathway by virus</keyword>
<keyword id="KW-1105">Inhibition of host STAT1 by virus</keyword>
<keyword id="KW-1106">Inhibition of host STAT2 by virus</keyword>
<keyword id="KW-1223">Inhibition of host TBK1 by virus</keyword>
<keyword id="KW-1225">Inhibition of host TLR pathway by virus</keyword>
<keyword id="KW-0922">Interferon antiviral system evasion</keyword>
<keyword id="KW-1177">Microtubular inwards viral transport</keyword>
<keyword id="KW-0597">Phosphoprotein</keyword>
<keyword id="KW-1185">Reference proteome</keyword>
<keyword id="KW-0899">Viral immunoevasion</keyword>
<keyword id="KW-0693">Viral RNA replication</keyword>
<keyword id="KW-0946">Virion</keyword>
<keyword id="KW-1160">Virus entry into host cell</keyword>
<accession>P06747</accession>
<organism>
    <name type="scientific">Rabies virus (strain Pasteur vaccins / PV)</name>
    <name type="common">RABV</name>
    <dbReference type="NCBI Taxonomy" id="103929"/>
    <lineage>
        <taxon>Viruses</taxon>
        <taxon>Riboviria</taxon>
        <taxon>Orthornavirae</taxon>
        <taxon>Negarnaviricota</taxon>
        <taxon>Haploviricotina</taxon>
        <taxon>Monjiviricetes</taxon>
        <taxon>Mononegavirales</taxon>
        <taxon>Rhabdoviridae</taxon>
        <taxon>Alpharhabdovirinae</taxon>
        <taxon>Lyssavirus</taxon>
        <taxon>Lyssavirus rabies</taxon>
    </lineage>
</organism>